<keyword id="KW-0002">3D-structure</keyword>
<keyword id="KW-0963">Cytoplasm</keyword>
<keyword id="KW-0240">DNA-directed RNA polymerase</keyword>
<keyword id="KW-0548">Nucleotidyltransferase</keyword>
<keyword id="KW-1185">Reference proteome</keyword>
<keyword id="KW-0804">Transcription</keyword>
<keyword id="KW-0808">Transferase</keyword>
<feature type="chain" id="PRO_0000132761" description="DNA-directed RNA polymerase subunit Rpo3">
    <location>
        <begin position="1"/>
        <end position="261"/>
    </location>
</feature>
<feature type="strand" evidence="3">
    <location>
        <begin position="5"/>
        <end position="11"/>
    </location>
</feature>
<feature type="strand" evidence="3">
    <location>
        <begin position="13"/>
        <end position="22"/>
    </location>
</feature>
<feature type="helix" evidence="3">
    <location>
        <begin position="25"/>
        <end position="37"/>
    </location>
</feature>
<feature type="strand" evidence="3">
    <location>
        <begin position="41"/>
        <end position="52"/>
    </location>
</feature>
<feature type="strand" evidence="3">
    <location>
        <begin position="54"/>
        <end position="56"/>
    </location>
</feature>
<feature type="helix" evidence="3">
    <location>
        <begin position="58"/>
        <end position="67"/>
    </location>
</feature>
<feature type="strand" evidence="3">
    <location>
        <begin position="74"/>
        <end position="77"/>
    </location>
</feature>
<feature type="strand" evidence="3">
    <location>
        <begin position="81"/>
        <end position="83"/>
    </location>
</feature>
<feature type="strand" evidence="3">
    <location>
        <begin position="88"/>
        <end position="102"/>
    </location>
</feature>
<feature type="helix" evidence="3">
    <location>
        <begin position="103"/>
        <end position="105"/>
    </location>
</feature>
<feature type="strand" evidence="3">
    <location>
        <begin position="107"/>
        <end position="110"/>
    </location>
</feature>
<feature type="strand" evidence="2">
    <location>
        <begin position="114"/>
        <end position="116"/>
    </location>
</feature>
<feature type="strand" evidence="3">
    <location>
        <begin position="121"/>
        <end position="125"/>
    </location>
</feature>
<feature type="strand" evidence="3">
    <location>
        <begin position="130"/>
        <end position="140"/>
    </location>
</feature>
<feature type="turn" evidence="3">
    <location>
        <begin position="142"/>
        <end position="144"/>
    </location>
</feature>
<feature type="helix" evidence="3">
    <location>
        <begin position="146"/>
        <end position="148"/>
    </location>
</feature>
<feature type="strand" evidence="3">
    <location>
        <begin position="152"/>
        <end position="164"/>
    </location>
</feature>
<feature type="helix" evidence="3">
    <location>
        <begin position="170"/>
        <end position="180"/>
    </location>
</feature>
<feature type="strand" evidence="3">
    <location>
        <begin position="184"/>
        <end position="187"/>
    </location>
</feature>
<feature type="strand" evidence="3">
    <location>
        <begin position="190"/>
        <end position="194"/>
    </location>
</feature>
<feature type="helix" evidence="3">
    <location>
        <begin position="204"/>
        <end position="208"/>
    </location>
</feature>
<feature type="turn" evidence="3">
    <location>
        <begin position="210"/>
        <end position="212"/>
    </location>
</feature>
<feature type="strand" evidence="3">
    <location>
        <begin position="213"/>
        <end position="227"/>
    </location>
</feature>
<feature type="strand" evidence="3">
    <location>
        <begin position="230"/>
        <end position="232"/>
    </location>
</feature>
<feature type="helix" evidence="3">
    <location>
        <begin position="234"/>
        <end position="257"/>
    </location>
</feature>
<reference key="1">
    <citation type="journal article" date="1999" name="Genetics">
        <title>Divergence of the hyperthermophilic archaea Pyrococcus furiosus and P. horikoshii inferred from complete genomic sequences.</title>
        <authorList>
            <person name="Maeder D.L."/>
            <person name="Weiss R.B."/>
            <person name="Dunn D.M."/>
            <person name="Cherry J.L."/>
            <person name="Gonzalez J.M."/>
            <person name="DiRuggiero J."/>
            <person name="Robb F.T."/>
        </authorList>
    </citation>
    <scope>NUCLEOTIDE SEQUENCE [LARGE SCALE GENOMIC DNA]</scope>
    <source>
        <strain>ATCC 43587 / DSM 3638 / JCM 8422 / Vc1</strain>
    </source>
</reference>
<dbReference type="EC" id="2.7.7.6" evidence="1"/>
<dbReference type="EMBL" id="AE009950">
    <property type="protein sequence ID" value="AAL81771.1"/>
    <property type="molecule type" value="Genomic_DNA"/>
</dbReference>
<dbReference type="RefSeq" id="WP_011012794.1">
    <property type="nucleotide sequence ID" value="NZ_CP023154.1"/>
</dbReference>
<dbReference type="PDB" id="8CRO">
    <property type="method" value="EM"/>
    <property type="resolution" value="3.10 A"/>
    <property type="chains" value="D=1-261"/>
</dbReference>
<dbReference type="PDB" id="8OKI">
    <property type="method" value="EM"/>
    <property type="resolution" value="3.45 A"/>
    <property type="chains" value="D=1-261"/>
</dbReference>
<dbReference type="PDB" id="8ORQ">
    <property type="method" value="EM"/>
    <property type="resolution" value="3.20 A"/>
    <property type="chains" value="D=1-261"/>
</dbReference>
<dbReference type="PDB" id="8P2I">
    <property type="method" value="EM"/>
    <property type="resolution" value="3.40 A"/>
    <property type="chains" value="D=1-261"/>
</dbReference>
<dbReference type="PDB" id="8RBO">
    <property type="method" value="EM"/>
    <property type="resolution" value="3.02 A"/>
    <property type="chains" value="D=1-261"/>
</dbReference>
<dbReference type="PDBsum" id="8CRO"/>
<dbReference type="PDBsum" id="8OKI"/>
<dbReference type="PDBsum" id="8ORQ"/>
<dbReference type="PDBsum" id="8P2I"/>
<dbReference type="PDBsum" id="8RBO"/>
<dbReference type="EMDB" id="EMD-16809"/>
<dbReference type="EMDB" id="EMD-16929"/>
<dbReference type="EMDB" id="EMD-17130"/>
<dbReference type="EMDB" id="EMD-17366"/>
<dbReference type="EMDB" id="EMD-19033"/>
<dbReference type="SMR" id="Q8U0E4"/>
<dbReference type="IntAct" id="Q8U0E4">
    <property type="interactions" value="1"/>
</dbReference>
<dbReference type="MINT" id="Q8U0E4"/>
<dbReference type="STRING" id="186497.PF1647"/>
<dbReference type="PaxDb" id="186497-PF1647"/>
<dbReference type="KEGG" id="pfu:PF1647"/>
<dbReference type="PATRIC" id="fig|186497.12.peg.1713"/>
<dbReference type="eggNOG" id="arCOG04241">
    <property type="taxonomic scope" value="Archaea"/>
</dbReference>
<dbReference type="HOGENOM" id="CLU_038421_3_1_2"/>
<dbReference type="OrthoDB" id="84933at2157"/>
<dbReference type="PhylomeDB" id="Q8U0E4"/>
<dbReference type="Proteomes" id="UP000001013">
    <property type="component" value="Chromosome"/>
</dbReference>
<dbReference type="GO" id="GO:0005737">
    <property type="term" value="C:cytoplasm"/>
    <property type="evidence" value="ECO:0007669"/>
    <property type="project" value="UniProtKB-SubCell"/>
</dbReference>
<dbReference type="GO" id="GO:0000428">
    <property type="term" value="C:DNA-directed RNA polymerase complex"/>
    <property type="evidence" value="ECO:0007669"/>
    <property type="project" value="UniProtKB-KW"/>
</dbReference>
<dbReference type="GO" id="GO:0003677">
    <property type="term" value="F:DNA binding"/>
    <property type="evidence" value="ECO:0007669"/>
    <property type="project" value="UniProtKB-UniRule"/>
</dbReference>
<dbReference type="GO" id="GO:0003899">
    <property type="term" value="F:DNA-directed RNA polymerase activity"/>
    <property type="evidence" value="ECO:0007669"/>
    <property type="project" value="UniProtKB-UniRule"/>
</dbReference>
<dbReference type="GO" id="GO:0046983">
    <property type="term" value="F:protein dimerization activity"/>
    <property type="evidence" value="ECO:0007669"/>
    <property type="project" value="InterPro"/>
</dbReference>
<dbReference type="GO" id="GO:0006351">
    <property type="term" value="P:DNA-templated transcription"/>
    <property type="evidence" value="ECO:0007669"/>
    <property type="project" value="UniProtKB-UniRule"/>
</dbReference>
<dbReference type="CDD" id="cd07030">
    <property type="entry name" value="RNAP_D"/>
    <property type="match status" value="1"/>
</dbReference>
<dbReference type="Gene3D" id="3.30.70.3110">
    <property type="match status" value="1"/>
</dbReference>
<dbReference type="Gene3D" id="2.170.120.12">
    <property type="entry name" value="DNA-directed RNA polymerase, insert domain"/>
    <property type="match status" value="1"/>
</dbReference>
<dbReference type="Gene3D" id="3.30.1360.10">
    <property type="entry name" value="RNA polymerase, RBP11-like subunit"/>
    <property type="match status" value="1"/>
</dbReference>
<dbReference type="HAMAP" id="MF_00320">
    <property type="entry name" value="RNApol_arch_Rpo3"/>
    <property type="match status" value="1"/>
</dbReference>
<dbReference type="InterPro" id="IPR001514">
    <property type="entry name" value="DNA-dir_RNA_pol_30-40kDasu_CS"/>
</dbReference>
<dbReference type="InterPro" id="IPR011262">
    <property type="entry name" value="DNA-dir_RNA_pol_insert"/>
</dbReference>
<dbReference type="InterPro" id="IPR011263">
    <property type="entry name" value="DNA-dir_RNA_pol_RpoA/D/Rpb3"/>
</dbReference>
<dbReference type="InterPro" id="IPR036603">
    <property type="entry name" value="RBP11-like"/>
</dbReference>
<dbReference type="InterPro" id="IPR022842">
    <property type="entry name" value="RNAP_Rpo3/Rpb3/RPAC1"/>
</dbReference>
<dbReference type="InterPro" id="IPR036643">
    <property type="entry name" value="RNApol_insert_sf"/>
</dbReference>
<dbReference type="InterPro" id="IPR050518">
    <property type="entry name" value="Rpo3/RPB3_RNA_Pol_subunit"/>
</dbReference>
<dbReference type="NCBIfam" id="NF001988">
    <property type="entry name" value="PRK00783.1"/>
    <property type="match status" value="1"/>
</dbReference>
<dbReference type="PANTHER" id="PTHR11800">
    <property type="entry name" value="DNA-DIRECTED RNA POLYMERASE"/>
    <property type="match status" value="1"/>
</dbReference>
<dbReference type="PANTHER" id="PTHR11800:SF2">
    <property type="entry name" value="DNA-DIRECTED RNA POLYMERASE II SUBUNIT RPB3"/>
    <property type="match status" value="1"/>
</dbReference>
<dbReference type="Pfam" id="PF01000">
    <property type="entry name" value="RNA_pol_A_bac"/>
    <property type="match status" value="1"/>
</dbReference>
<dbReference type="Pfam" id="PF01193">
    <property type="entry name" value="RNA_pol_L"/>
    <property type="match status" value="1"/>
</dbReference>
<dbReference type="SMART" id="SM00662">
    <property type="entry name" value="RPOLD"/>
    <property type="match status" value="1"/>
</dbReference>
<dbReference type="SUPFAM" id="SSF56553">
    <property type="entry name" value="Insert subdomain of RNA polymerase alpha subunit"/>
    <property type="match status" value="1"/>
</dbReference>
<dbReference type="SUPFAM" id="SSF55257">
    <property type="entry name" value="RBP11-like subunits of RNA polymerase"/>
    <property type="match status" value="1"/>
</dbReference>
<dbReference type="PROSITE" id="PS00446">
    <property type="entry name" value="RNA_POL_D_30KD"/>
    <property type="match status" value="1"/>
</dbReference>
<comment type="function">
    <text evidence="1">DNA-dependent RNA polymerase (RNAP) catalyzes the transcription of DNA into RNA using the four ribonucleoside triphosphates as substrates.</text>
</comment>
<comment type="catalytic activity">
    <reaction evidence="1">
        <text>RNA(n) + a ribonucleoside 5'-triphosphate = RNA(n+1) + diphosphate</text>
        <dbReference type="Rhea" id="RHEA:21248"/>
        <dbReference type="Rhea" id="RHEA-COMP:14527"/>
        <dbReference type="Rhea" id="RHEA-COMP:17342"/>
        <dbReference type="ChEBI" id="CHEBI:33019"/>
        <dbReference type="ChEBI" id="CHEBI:61557"/>
        <dbReference type="ChEBI" id="CHEBI:140395"/>
        <dbReference type="EC" id="2.7.7.6"/>
    </reaction>
</comment>
<comment type="subunit">
    <text evidence="1">Part of the RNA polymerase complex.</text>
</comment>
<comment type="subcellular location">
    <subcellularLocation>
        <location evidence="1">Cytoplasm</location>
    </subcellularLocation>
</comment>
<comment type="similarity">
    <text evidence="1">Belongs to the archaeal Rpo3/eukaryotic RPB3 RNA polymerase subunit family.</text>
</comment>
<protein>
    <recommendedName>
        <fullName evidence="1">DNA-directed RNA polymerase subunit Rpo3</fullName>
        <ecNumber evidence="1">2.7.7.6</ecNumber>
    </recommendedName>
    <alternativeName>
        <fullName evidence="1">DNA-directed RNA polymerase subunit D</fullName>
    </alternativeName>
</protein>
<proteinExistence type="evidence at protein level"/>
<evidence type="ECO:0000255" key="1">
    <source>
        <dbReference type="HAMAP-Rule" id="MF_00320"/>
    </source>
</evidence>
<evidence type="ECO:0007829" key="2">
    <source>
        <dbReference type="PDB" id="8CRO"/>
    </source>
</evidence>
<evidence type="ECO:0007829" key="3">
    <source>
        <dbReference type="PDB" id="8RBO"/>
    </source>
</evidence>
<sequence length="261" mass="29781">MAGIEVQILEKKEDSIKFVLKGVHVSFANALRRTILGEVPTFAVDEVEFYENDSALFDEIIAHRLAMIPLTTPVDRFELDALELDDYTVTLSLEAEGPGIVYSGDLKSDDPDVKPVNPNIPIVKLAEGQRLVFNAYAKLGRGKDHAKWQPGFVYYKYYTIVHISKSIPEWKELKKLAKKRGLPVEETEEEVLVTTIKPFYIPKDFEEYEGKEIWEEIVPNTYIFTVETNGELPVEEIVSIALKILMRKADRFISELQKLTS</sequence>
<name>RPO3_PYRFU</name>
<accession>Q8U0E4</accession>
<organism>
    <name type="scientific">Pyrococcus furiosus (strain ATCC 43587 / DSM 3638 / JCM 8422 / Vc1)</name>
    <dbReference type="NCBI Taxonomy" id="186497"/>
    <lineage>
        <taxon>Archaea</taxon>
        <taxon>Methanobacteriati</taxon>
        <taxon>Methanobacteriota</taxon>
        <taxon>Thermococci</taxon>
        <taxon>Thermococcales</taxon>
        <taxon>Thermococcaceae</taxon>
        <taxon>Pyrococcus</taxon>
    </lineage>
</organism>
<gene>
    <name evidence="1" type="primary">rpo3</name>
    <name evidence="1" type="synonym">rpoD</name>
    <name type="ordered locus">PF1647</name>
</gene>